<proteinExistence type="inferred from homology"/>
<evidence type="ECO:0000255" key="1">
    <source>
        <dbReference type="HAMAP-Rule" id="MF_01048"/>
    </source>
</evidence>
<protein>
    <recommendedName>
        <fullName evidence="1">Protein PsiE</fullName>
    </recommendedName>
</protein>
<sequence>MMPLSRSRLEFIATILQNVLNLGLLTLGLILVVFLGKETVHLADALFAPEQASKYELVEGLVIYFLYFEFIALIVKYFKSGLHFPLRYFVYIGITAIVRLIIVDHKTPMDVLLYSAAILLLVITLWLCNSNRLRRE</sequence>
<feature type="chain" id="PRO_1000149617" description="Protein PsiE">
    <location>
        <begin position="1"/>
        <end position="136"/>
    </location>
</feature>
<feature type="transmembrane region" description="Helical" evidence="1">
    <location>
        <begin position="15"/>
        <end position="35"/>
    </location>
</feature>
<feature type="transmembrane region" description="Helical" evidence="1">
    <location>
        <begin position="55"/>
        <end position="75"/>
    </location>
</feature>
<feature type="transmembrane region" description="Helical" evidence="1">
    <location>
        <begin position="83"/>
        <end position="103"/>
    </location>
</feature>
<feature type="transmembrane region" description="Helical" evidence="1">
    <location>
        <begin position="108"/>
        <end position="128"/>
    </location>
</feature>
<keyword id="KW-0997">Cell inner membrane</keyword>
<keyword id="KW-1003">Cell membrane</keyword>
<keyword id="KW-0472">Membrane</keyword>
<keyword id="KW-0812">Transmembrane</keyword>
<keyword id="KW-1133">Transmembrane helix</keyword>
<accession>C0Q4D1</accession>
<name>PSIE_SALPC</name>
<gene>
    <name evidence="1" type="primary">psiE</name>
    <name type="ordered locus">SPC_4287</name>
</gene>
<dbReference type="EMBL" id="CP000857">
    <property type="protein sequence ID" value="ACN48350.1"/>
    <property type="molecule type" value="Genomic_DNA"/>
</dbReference>
<dbReference type="RefSeq" id="WP_000982749.1">
    <property type="nucleotide sequence ID" value="NC_012125.1"/>
</dbReference>
<dbReference type="SMR" id="C0Q4D1"/>
<dbReference type="KEGG" id="sei:SPC_4287"/>
<dbReference type="HOGENOM" id="CLU_127561_0_1_6"/>
<dbReference type="Proteomes" id="UP000001599">
    <property type="component" value="Chromosome"/>
</dbReference>
<dbReference type="GO" id="GO:0005886">
    <property type="term" value="C:plasma membrane"/>
    <property type="evidence" value="ECO:0007669"/>
    <property type="project" value="UniProtKB-SubCell"/>
</dbReference>
<dbReference type="GO" id="GO:0016036">
    <property type="term" value="P:cellular response to phosphate starvation"/>
    <property type="evidence" value="ECO:0007669"/>
    <property type="project" value="InterPro"/>
</dbReference>
<dbReference type="HAMAP" id="MF_01048">
    <property type="entry name" value="PsiE"/>
    <property type="match status" value="1"/>
</dbReference>
<dbReference type="InterPro" id="IPR009315">
    <property type="entry name" value="P_starv_induced_PsiE"/>
</dbReference>
<dbReference type="InterPro" id="IPR020948">
    <property type="entry name" value="P_starv_induced_PsiE-like"/>
</dbReference>
<dbReference type="NCBIfam" id="NF002764">
    <property type="entry name" value="PRK02833.1-2"/>
    <property type="match status" value="1"/>
</dbReference>
<dbReference type="NCBIfam" id="NF002765">
    <property type="entry name" value="PRK02833.1-3"/>
    <property type="match status" value="1"/>
</dbReference>
<dbReference type="NCBIfam" id="NF002767">
    <property type="entry name" value="PRK02833.1-5"/>
    <property type="match status" value="1"/>
</dbReference>
<dbReference type="PANTHER" id="PTHR37819">
    <property type="entry name" value="PROTEIN PSIE"/>
    <property type="match status" value="1"/>
</dbReference>
<dbReference type="PANTHER" id="PTHR37819:SF1">
    <property type="entry name" value="PROTEIN PSIE"/>
    <property type="match status" value="1"/>
</dbReference>
<dbReference type="Pfam" id="PF06146">
    <property type="entry name" value="PsiE"/>
    <property type="match status" value="1"/>
</dbReference>
<dbReference type="PIRSF" id="PIRSF029598">
    <property type="entry name" value="PsiE"/>
    <property type="match status" value="1"/>
</dbReference>
<organism>
    <name type="scientific">Salmonella paratyphi C (strain RKS4594)</name>
    <dbReference type="NCBI Taxonomy" id="476213"/>
    <lineage>
        <taxon>Bacteria</taxon>
        <taxon>Pseudomonadati</taxon>
        <taxon>Pseudomonadota</taxon>
        <taxon>Gammaproteobacteria</taxon>
        <taxon>Enterobacterales</taxon>
        <taxon>Enterobacteriaceae</taxon>
        <taxon>Salmonella</taxon>
    </lineage>
</organism>
<reference key="1">
    <citation type="journal article" date="2009" name="PLoS ONE">
        <title>Salmonella paratyphi C: genetic divergence from Salmonella choleraesuis and pathogenic convergence with Salmonella typhi.</title>
        <authorList>
            <person name="Liu W.-Q."/>
            <person name="Feng Y."/>
            <person name="Wang Y."/>
            <person name="Zou Q.-H."/>
            <person name="Chen F."/>
            <person name="Guo J.-T."/>
            <person name="Peng Y.-H."/>
            <person name="Jin Y."/>
            <person name="Li Y.-G."/>
            <person name="Hu S.-N."/>
            <person name="Johnston R.N."/>
            <person name="Liu G.-R."/>
            <person name="Liu S.-L."/>
        </authorList>
    </citation>
    <scope>NUCLEOTIDE SEQUENCE [LARGE SCALE GENOMIC DNA]</scope>
    <source>
        <strain>RKS4594</strain>
    </source>
</reference>
<comment type="subcellular location">
    <subcellularLocation>
        <location evidence="1">Cell inner membrane</location>
        <topology evidence="1">Multi-pass membrane protein</topology>
    </subcellularLocation>
</comment>
<comment type="similarity">
    <text evidence="1">Belongs to the PsiE family.</text>
</comment>